<evidence type="ECO:0000255" key="1">
    <source>
        <dbReference type="HAMAP-Rule" id="MF_01859"/>
    </source>
</evidence>
<gene>
    <name evidence="1" type="primary">rlmG</name>
    <name type="ordered locus">PFL_5361</name>
</gene>
<keyword id="KW-0963">Cytoplasm</keyword>
<keyword id="KW-0489">Methyltransferase</keyword>
<keyword id="KW-0698">rRNA processing</keyword>
<keyword id="KW-0949">S-adenosyl-L-methionine</keyword>
<keyword id="KW-0808">Transferase</keyword>
<sequence>MSLLASPFAQLDLIRQPEQQNEPLQAFDAADEYLLNHLAEQQPASDTRVLVLNDSFGALAASLLGKVQVSSSGDSYLGALALEKNLVRNGLPFDAVRVVPASEPLAGPFDRVLIRVPKTLALLEEQLIRLQGQLAPGAQVVAAAMVKHLPRAAGDLLERYIGPVQASLAVKKARLLIATPQDKQPVVSPYPTRYRLEQPAIELLNHANVFCREGLDIGTRAFLPHLPQNLGSARVADLGCGNGVLAIASALDNPQAHYTLVDESFMAVQSARENWQAVLGEREAQMRAGDGLAGQAAQSLEVVLCNPPFHQQQVVGDFLAWRMFQQAREALVVGGALYIVGNRHLGYHSKLARLFRGVEQVAATPKFVILKARK</sequence>
<dbReference type="EC" id="2.1.1.174" evidence="1"/>
<dbReference type="EMBL" id="CP000076">
    <property type="protein sequence ID" value="AAY94571.1"/>
    <property type="molecule type" value="Genomic_DNA"/>
</dbReference>
<dbReference type="RefSeq" id="WP_011063585.1">
    <property type="nucleotide sequence ID" value="NC_004129.6"/>
</dbReference>
<dbReference type="SMR" id="Q4K5Q4"/>
<dbReference type="STRING" id="220664.PFL_5361"/>
<dbReference type="KEGG" id="pfl:PFL_5361"/>
<dbReference type="PATRIC" id="fig|220664.5.peg.5474"/>
<dbReference type="eggNOG" id="COG2813">
    <property type="taxonomic scope" value="Bacteria"/>
</dbReference>
<dbReference type="HOGENOM" id="CLU_040288_4_0_6"/>
<dbReference type="Proteomes" id="UP000008540">
    <property type="component" value="Chromosome"/>
</dbReference>
<dbReference type="GO" id="GO:0005737">
    <property type="term" value="C:cytoplasm"/>
    <property type="evidence" value="ECO:0007669"/>
    <property type="project" value="UniProtKB-SubCell"/>
</dbReference>
<dbReference type="GO" id="GO:0052916">
    <property type="term" value="F:23S rRNA (guanine(1835)-N(2))-methyltransferase activity"/>
    <property type="evidence" value="ECO:0007669"/>
    <property type="project" value="UniProtKB-EC"/>
</dbReference>
<dbReference type="GO" id="GO:0003676">
    <property type="term" value="F:nucleic acid binding"/>
    <property type="evidence" value="ECO:0007669"/>
    <property type="project" value="InterPro"/>
</dbReference>
<dbReference type="CDD" id="cd02440">
    <property type="entry name" value="AdoMet_MTases"/>
    <property type="match status" value="1"/>
</dbReference>
<dbReference type="Gene3D" id="3.40.50.150">
    <property type="entry name" value="Vaccinia Virus protein VP39"/>
    <property type="match status" value="2"/>
</dbReference>
<dbReference type="HAMAP" id="MF_01859">
    <property type="entry name" value="23SrRNA_methyltr_G"/>
    <property type="match status" value="1"/>
</dbReference>
<dbReference type="InterPro" id="IPR002052">
    <property type="entry name" value="DNA_methylase_N6_adenine_CS"/>
</dbReference>
<dbReference type="InterPro" id="IPR017237">
    <property type="entry name" value="rRNA_m2G-MeTrfase_RlmG"/>
</dbReference>
<dbReference type="InterPro" id="IPR046977">
    <property type="entry name" value="RsmC/RlmG"/>
</dbReference>
<dbReference type="InterPro" id="IPR029063">
    <property type="entry name" value="SAM-dependent_MTases_sf"/>
</dbReference>
<dbReference type="InterPro" id="IPR007848">
    <property type="entry name" value="Small_mtfrase_dom"/>
</dbReference>
<dbReference type="PANTHER" id="PTHR47816:SF5">
    <property type="entry name" value="RIBOSOMAL RNA LARGE SUBUNIT METHYLTRANSFERASE G"/>
    <property type="match status" value="1"/>
</dbReference>
<dbReference type="PANTHER" id="PTHR47816">
    <property type="entry name" value="RIBOSOMAL RNA SMALL SUBUNIT METHYLTRANSFERASE C"/>
    <property type="match status" value="1"/>
</dbReference>
<dbReference type="Pfam" id="PF05175">
    <property type="entry name" value="MTS"/>
    <property type="match status" value="1"/>
</dbReference>
<dbReference type="PIRSF" id="PIRSF037565">
    <property type="entry name" value="RRNA_m2G_Mtase_RsmD_prd"/>
    <property type="match status" value="1"/>
</dbReference>
<dbReference type="SUPFAM" id="SSF53335">
    <property type="entry name" value="S-adenosyl-L-methionine-dependent methyltransferases"/>
    <property type="match status" value="1"/>
</dbReference>
<comment type="function">
    <text evidence="1">Specifically methylates the guanine in position 1835 (m2G1835) of 23S rRNA.</text>
</comment>
<comment type="catalytic activity">
    <reaction evidence="1">
        <text>guanosine(1835) in 23S rRNA + S-adenosyl-L-methionine = N(2)-methylguanosine(1835) in 23S rRNA + S-adenosyl-L-homocysteine + H(+)</text>
        <dbReference type="Rhea" id="RHEA:42744"/>
        <dbReference type="Rhea" id="RHEA-COMP:10217"/>
        <dbReference type="Rhea" id="RHEA-COMP:10218"/>
        <dbReference type="ChEBI" id="CHEBI:15378"/>
        <dbReference type="ChEBI" id="CHEBI:57856"/>
        <dbReference type="ChEBI" id="CHEBI:59789"/>
        <dbReference type="ChEBI" id="CHEBI:74269"/>
        <dbReference type="ChEBI" id="CHEBI:74481"/>
        <dbReference type="EC" id="2.1.1.174"/>
    </reaction>
</comment>
<comment type="subcellular location">
    <subcellularLocation>
        <location evidence="1">Cytoplasm</location>
    </subcellularLocation>
</comment>
<comment type="similarity">
    <text evidence="1">Belongs to the methyltransferase superfamily. RlmG family.</text>
</comment>
<reference key="1">
    <citation type="journal article" date="2005" name="Nat. Biotechnol.">
        <title>Complete genome sequence of the plant commensal Pseudomonas fluorescens Pf-5.</title>
        <authorList>
            <person name="Paulsen I.T."/>
            <person name="Press C.M."/>
            <person name="Ravel J."/>
            <person name="Kobayashi D.Y."/>
            <person name="Myers G.S.A."/>
            <person name="Mavrodi D.V."/>
            <person name="DeBoy R.T."/>
            <person name="Seshadri R."/>
            <person name="Ren Q."/>
            <person name="Madupu R."/>
            <person name="Dodson R.J."/>
            <person name="Durkin A.S."/>
            <person name="Brinkac L.M."/>
            <person name="Daugherty S.C."/>
            <person name="Sullivan S.A."/>
            <person name="Rosovitz M.J."/>
            <person name="Gwinn M.L."/>
            <person name="Zhou L."/>
            <person name="Schneider D.J."/>
            <person name="Cartinhour S.W."/>
            <person name="Nelson W.C."/>
            <person name="Weidman J."/>
            <person name="Watkins K."/>
            <person name="Tran K."/>
            <person name="Khouri H."/>
            <person name="Pierson E.A."/>
            <person name="Pierson L.S. III"/>
            <person name="Thomashow L.S."/>
            <person name="Loper J.E."/>
        </authorList>
    </citation>
    <scope>NUCLEOTIDE SEQUENCE [LARGE SCALE GENOMIC DNA]</scope>
    <source>
        <strain>ATCC BAA-477 / NRRL B-23932 / Pf-5</strain>
    </source>
</reference>
<accession>Q4K5Q4</accession>
<name>RLMG_PSEF5</name>
<feature type="chain" id="PRO_0000366476" description="Ribosomal RNA large subunit methyltransferase G">
    <location>
        <begin position="1"/>
        <end position="374"/>
    </location>
</feature>
<organism>
    <name type="scientific">Pseudomonas fluorescens (strain ATCC BAA-477 / NRRL B-23932 / Pf-5)</name>
    <dbReference type="NCBI Taxonomy" id="220664"/>
    <lineage>
        <taxon>Bacteria</taxon>
        <taxon>Pseudomonadati</taxon>
        <taxon>Pseudomonadota</taxon>
        <taxon>Gammaproteobacteria</taxon>
        <taxon>Pseudomonadales</taxon>
        <taxon>Pseudomonadaceae</taxon>
        <taxon>Pseudomonas</taxon>
    </lineage>
</organism>
<protein>
    <recommendedName>
        <fullName evidence="1">Ribosomal RNA large subunit methyltransferase G</fullName>
        <ecNumber evidence="1">2.1.1.174</ecNumber>
    </recommendedName>
    <alternativeName>
        <fullName evidence="1">23S rRNA m2G1835 methyltransferase</fullName>
    </alternativeName>
    <alternativeName>
        <fullName evidence="1">rRNA (guanine-N(2)-)-methyltransferase RlmG</fullName>
    </alternativeName>
</protein>
<proteinExistence type="inferred from homology"/>